<organism>
    <name type="scientific">Mus musculus</name>
    <name type="common">Mouse</name>
    <dbReference type="NCBI Taxonomy" id="10090"/>
    <lineage>
        <taxon>Eukaryota</taxon>
        <taxon>Metazoa</taxon>
        <taxon>Chordata</taxon>
        <taxon>Craniata</taxon>
        <taxon>Vertebrata</taxon>
        <taxon>Euteleostomi</taxon>
        <taxon>Mammalia</taxon>
        <taxon>Eutheria</taxon>
        <taxon>Euarchontoglires</taxon>
        <taxon>Glires</taxon>
        <taxon>Rodentia</taxon>
        <taxon>Myomorpha</taxon>
        <taxon>Muroidea</taxon>
        <taxon>Muridae</taxon>
        <taxon>Murinae</taxon>
        <taxon>Mus</taxon>
        <taxon>Mus</taxon>
    </lineage>
</organism>
<evidence type="ECO:0000250" key="1">
    <source>
        <dbReference type="UniProtKB" id="Q147X3"/>
    </source>
</evidence>
<evidence type="ECO:0000255" key="2">
    <source>
        <dbReference type="PROSITE-ProRule" id="PRU00532"/>
    </source>
</evidence>
<evidence type="ECO:0000256" key="3">
    <source>
        <dbReference type="SAM" id="MobiDB-lite"/>
    </source>
</evidence>
<evidence type="ECO:0000303" key="4">
    <source>
    </source>
</evidence>
<evidence type="ECO:0000305" key="5"/>
<evidence type="ECO:0007744" key="6">
    <source>
    </source>
</evidence>
<evidence type="ECO:0007744" key="7">
    <source>
    </source>
</evidence>
<sequence length="364" mass="39433">MAEVPPGPSSLLPPPAPAAPAAAELRCPFPAGAALACCSEDEEDDEEHEGGCGSPAGGEAATSAKARSCLRCPQLPPEQQQQQLNGLIGPELRHLRAAATLKSKVLSAAEAAAPDGASKVTATKGAEGHPGERPPHSVPNNARTALPGRSEAAAAAAGAASDPAAARNGLVEGTEQQEEEEMDEQVRLLSSSLTTGCSLRSSQGREAEPGEDRTIRYVRYESELQMPDIMRLITKDLSEPYSIYTYRYFIHNWPQLCFLAMVGEECVGAIVCKLDMHKKMFRRGYIAMLAVDSKYRRNGIGTNLVKKAIYAMVEGDCDEVVLETEITNKSALKLYENLGFVRDKRLFRYYLNGVDALRLKLWLR</sequence>
<gene>
    <name type="primary">Naa30</name>
    <name type="synonym">Mak3</name>
    <name type="synonym">Nat12</name>
</gene>
<accession>Q8CES0</accession>
<accession>B2RY23</accession>
<accession>Q7TN07</accession>
<feature type="chain" id="PRO_0000320033" description="N-alpha-acetyltransferase 30">
    <location>
        <begin position="1"/>
        <end position="364"/>
    </location>
</feature>
<feature type="domain" description="N-acetyltransferase" evidence="2">
    <location>
        <begin position="216"/>
        <end position="364"/>
    </location>
</feature>
<feature type="region of interest" description="Disordered" evidence="3">
    <location>
        <begin position="1"/>
        <end position="21"/>
    </location>
</feature>
<feature type="region of interest" description="Disordered" evidence="3">
    <location>
        <begin position="39"/>
        <end position="65"/>
    </location>
</feature>
<feature type="region of interest" description="Disordered" evidence="3">
    <location>
        <begin position="110"/>
        <end position="164"/>
    </location>
</feature>
<feature type="compositionally biased region" description="Pro residues" evidence="3">
    <location>
        <begin position="1"/>
        <end position="18"/>
    </location>
</feature>
<feature type="compositionally biased region" description="Acidic residues" evidence="3">
    <location>
        <begin position="39"/>
        <end position="48"/>
    </location>
</feature>
<feature type="compositionally biased region" description="Basic and acidic residues" evidence="3">
    <location>
        <begin position="126"/>
        <end position="135"/>
    </location>
</feature>
<feature type="compositionally biased region" description="Low complexity" evidence="3">
    <location>
        <begin position="152"/>
        <end position="164"/>
    </location>
</feature>
<feature type="modified residue" description="Phosphoserine" evidence="6">
    <location>
        <position position="39"/>
    </location>
</feature>
<feature type="modified residue" description="Phosphoserine" evidence="6">
    <location>
        <position position="54"/>
    </location>
</feature>
<feature type="modified residue" description="Phosphoserine" evidence="1">
    <location>
        <position position="192"/>
    </location>
</feature>
<feature type="modified residue" description="Phosphoserine" evidence="1">
    <location>
        <position position="198"/>
    </location>
</feature>
<feature type="modified residue" description="Phosphoserine" evidence="1">
    <location>
        <position position="201"/>
    </location>
</feature>
<feature type="modified residue" description="N6-acetyllysine" evidence="7">
    <location>
        <position position="235"/>
    </location>
</feature>
<feature type="splice variant" id="VSP_031582" description="In isoform 2." evidence="4">
    <location>
        <begin position="1"/>
        <end position="229"/>
    </location>
</feature>
<feature type="splice variant" id="VSP_031583" description="In isoform 2." evidence="4">
    <original>MRLITKDLSEPYSIYTYRYFIHNWPQLCFL</original>
    <variation>MLPQSLLLFPLVIVQYLMAMCLHNCLFIFK</variation>
    <location>
        <begin position="230"/>
        <end position="259"/>
    </location>
</feature>
<feature type="sequence conflict" description="In Ref. 1; BAC25468." evidence="5" ref="1">
    <original>WL</original>
    <variation>CV</variation>
    <location>
        <begin position="362"/>
        <end position="363"/>
    </location>
</feature>
<reference key="1">
    <citation type="journal article" date="2005" name="Science">
        <title>The transcriptional landscape of the mammalian genome.</title>
        <authorList>
            <person name="Carninci P."/>
            <person name="Kasukawa T."/>
            <person name="Katayama S."/>
            <person name="Gough J."/>
            <person name="Frith M.C."/>
            <person name="Maeda N."/>
            <person name="Oyama R."/>
            <person name="Ravasi T."/>
            <person name="Lenhard B."/>
            <person name="Wells C."/>
            <person name="Kodzius R."/>
            <person name="Shimokawa K."/>
            <person name="Bajic V.B."/>
            <person name="Brenner S.E."/>
            <person name="Batalov S."/>
            <person name="Forrest A.R."/>
            <person name="Zavolan M."/>
            <person name="Davis M.J."/>
            <person name="Wilming L.G."/>
            <person name="Aidinis V."/>
            <person name="Allen J.E."/>
            <person name="Ambesi-Impiombato A."/>
            <person name="Apweiler R."/>
            <person name="Aturaliya R.N."/>
            <person name="Bailey T.L."/>
            <person name="Bansal M."/>
            <person name="Baxter L."/>
            <person name="Beisel K.W."/>
            <person name="Bersano T."/>
            <person name="Bono H."/>
            <person name="Chalk A.M."/>
            <person name="Chiu K.P."/>
            <person name="Choudhary V."/>
            <person name="Christoffels A."/>
            <person name="Clutterbuck D.R."/>
            <person name="Crowe M.L."/>
            <person name="Dalla E."/>
            <person name="Dalrymple B.P."/>
            <person name="de Bono B."/>
            <person name="Della Gatta G."/>
            <person name="di Bernardo D."/>
            <person name="Down T."/>
            <person name="Engstrom P."/>
            <person name="Fagiolini M."/>
            <person name="Faulkner G."/>
            <person name="Fletcher C.F."/>
            <person name="Fukushima T."/>
            <person name="Furuno M."/>
            <person name="Futaki S."/>
            <person name="Gariboldi M."/>
            <person name="Georgii-Hemming P."/>
            <person name="Gingeras T.R."/>
            <person name="Gojobori T."/>
            <person name="Green R.E."/>
            <person name="Gustincich S."/>
            <person name="Harbers M."/>
            <person name="Hayashi Y."/>
            <person name="Hensch T.K."/>
            <person name="Hirokawa N."/>
            <person name="Hill D."/>
            <person name="Huminiecki L."/>
            <person name="Iacono M."/>
            <person name="Ikeo K."/>
            <person name="Iwama A."/>
            <person name="Ishikawa T."/>
            <person name="Jakt M."/>
            <person name="Kanapin A."/>
            <person name="Katoh M."/>
            <person name="Kawasawa Y."/>
            <person name="Kelso J."/>
            <person name="Kitamura H."/>
            <person name="Kitano H."/>
            <person name="Kollias G."/>
            <person name="Krishnan S.P."/>
            <person name="Kruger A."/>
            <person name="Kummerfeld S.K."/>
            <person name="Kurochkin I.V."/>
            <person name="Lareau L.F."/>
            <person name="Lazarevic D."/>
            <person name="Lipovich L."/>
            <person name="Liu J."/>
            <person name="Liuni S."/>
            <person name="McWilliam S."/>
            <person name="Madan Babu M."/>
            <person name="Madera M."/>
            <person name="Marchionni L."/>
            <person name="Matsuda H."/>
            <person name="Matsuzawa S."/>
            <person name="Miki H."/>
            <person name="Mignone F."/>
            <person name="Miyake S."/>
            <person name="Morris K."/>
            <person name="Mottagui-Tabar S."/>
            <person name="Mulder N."/>
            <person name="Nakano N."/>
            <person name="Nakauchi H."/>
            <person name="Ng P."/>
            <person name="Nilsson R."/>
            <person name="Nishiguchi S."/>
            <person name="Nishikawa S."/>
            <person name="Nori F."/>
            <person name="Ohara O."/>
            <person name="Okazaki Y."/>
            <person name="Orlando V."/>
            <person name="Pang K.C."/>
            <person name="Pavan W.J."/>
            <person name="Pavesi G."/>
            <person name="Pesole G."/>
            <person name="Petrovsky N."/>
            <person name="Piazza S."/>
            <person name="Reed J."/>
            <person name="Reid J.F."/>
            <person name="Ring B.Z."/>
            <person name="Ringwald M."/>
            <person name="Rost B."/>
            <person name="Ruan Y."/>
            <person name="Salzberg S.L."/>
            <person name="Sandelin A."/>
            <person name="Schneider C."/>
            <person name="Schoenbach C."/>
            <person name="Sekiguchi K."/>
            <person name="Semple C.A."/>
            <person name="Seno S."/>
            <person name="Sessa L."/>
            <person name="Sheng Y."/>
            <person name="Shibata Y."/>
            <person name="Shimada H."/>
            <person name="Shimada K."/>
            <person name="Silva D."/>
            <person name="Sinclair B."/>
            <person name="Sperling S."/>
            <person name="Stupka E."/>
            <person name="Sugiura K."/>
            <person name="Sultana R."/>
            <person name="Takenaka Y."/>
            <person name="Taki K."/>
            <person name="Tammoja K."/>
            <person name="Tan S.L."/>
            <person name="Tang S."/>
            <person name="Taylor M.S."/>
            <person name="Tegner J."/>
            <person name="Teichmann S.A."/>
            <person name="Ueda H.R."/>
            <person name="van Nimwegen E."/>
            <person name="Verardo R."/>
            <person name="Wei C.L."/>
            <person name="Yagi K."/>
            <person name="Yamanishi H."/>
            <person name="Zabarovsky E."/>
            <person name="Zhu S."/>
            <person name="Zimmer A."/>
            <person name="Hide W."/>
            <person name="Bult C."/>
            <person name="Grimmond S.M."/>
            <person name="Teasdale R.D."/>
            <person name="Liu E.T."/>
            <person name="Brusic V."/>
            <person name="Quackenbush J."/>
            <person name="Wahlestedt C."/>
            <person name="Mattick J.S."/>
            <person name="Hume D.A."/>
            <person name="Kai C."/>
            <person name="Sasaki D."/>
            <person name="Tomaru Y."/>
            <person name="Fukuda S."/>
            <person name="Kanamori-Katayama M."/>
            <person name="Suzuki M."/>
            <person name="Aoki J."/>
            <person name="Arakawa T."/>
            <person name="Iida J."/>
            <person name="Imamura K."/>
            <person name="Itoh M."/>
            <person name="Kato T."/>
            <person name="Kawaji H."/>
            <person name="Kawagashira N."/>
            <person name="Kawashima T."/>
            <person name="Kojima M."/>
            <person name="Kondo S."/>
            <person name="Konno H."/>
            <person name="Nakano K."/>
            <person name="Ninomiya N."/>
            <person name="Nishio T."/>
            <person name="Okada M."/>
            <person name="Plessy C."/>
            <person name="Shibata K."/>
            <person name="Shiraki T."/>
            <person name="Suzuki S."/>
            <person name="Tagami M."/>
            <person name="Waki K."/>
            <person name="Watahiki A."/>
            <person name="Okamura-Oho Y."/>
            <person name="Suzuki H."/>
            <person name="Kawai J."/>
            <person name="Hayashizaki Y."/>
        </authorList>
    </citation>
    <scope>NUCLEOTIDE SEQUENCE [LARGE SCALE MRNA] (ISOFORM 1)</scope>
    <source>
        <strain>C57BL/6J</strain>
        <tissue>Testis</tissue>
    </source>
</reference>
<reference key="2">
    <citation type="journal article" date="2004" name="Genome Res.">
        <title>The status, quality, and expansion of the NIH full-length cDNA project: the Mammalian Gene Collection (MGC).</title>
        <authorList>
            <consortium name="The MGC Project Team"/>
        </authorList>
    </citation>
    <scope>NUCLEOTIDE SEQUENCE [LARGE SCALE MRNA] (ISOFORMS 1 AND 2)</scope>
    <source>
        <strain>C57BL/6J</strain>
        <tissue>Brain</tissue>
        <tissue>Thymus</tissue>
    </source>
</reference>
<reference key="3">
    <citation type="journal article" date="2007" name="Proc. Natl. Acad. Sci. U.S.A.">
        <title>Large-scale phosphorylation analysis of mouse liver.</title>
        <authorList>
            <person name="Villen J."/>
            <person name="Beausoleil S.A."/>
            <person name="Gerber S.A."/>
            <person name="Gygi S.P."/>
        </authorList>
    </citation>
    <scope>IDENTIFICATION BY MASS SPECTROMETRY [LARGE SCALE ANALYSIS]</scope>
    <source>
        <tissue>Liver</tissue>
    </source>
</reference>
<reference key="4">
    <citation type="journal article" date="2010" name="Cell">
        <title>A tissue-specific atlas of mouse protein phosphorylation and expression.</title>
        <authorList>
            <person name="Huttlin E.L."/>
            <person name="Jedrychowski M.P."/>
            <person name="Elias J.E."/>
            <person name="Goswami T."/>
            <person name="Rad R."/>
            <person name="Beausoleil S.A."/>
            <person name="Villen J."/>
            <person name="Haas W."/>
            <person name="Sowa M.E."/>
            <person name="Gygi S.P."/>
        </authorList>
    </citation>
    <scope>PHOSPHORYLATION [LARGE SCALE ANALYSIS] AT SER-39 AND SER-54</scope>
    <scope>IDENTIFICATION BY MASS SPECTROMETRY [LARGE SCALE ANALYSIS]</scope>
    <source>
        <tissue>Brain</tissue>
        <tissue>Kidney</tissue>
        <tissue>Lung</tissue>
        <tissue>Pancreas</tissue>
        <tissue>Testis</tissue>
    </source>
</reference>
<reference key="5">
    <citation type="journal article" date="2013" name="Mol. Cell">
        <title>SIRT5-mediated lysine desuccinylation impacts diverse metabolic pathways.</title>
        <authorList>
            <person name="Park J."/>
            <person name="Chen Y."/>
            <person name="Tishkoff D.X."/>
            <person name="Peng C."/>
            <person name="Tan M."/>
            <person name="Dai L."/>
            <person name="Xie Z."/>
            <person name="Zhang Y."/>
            <person name="Zwaans B.M."/>
            <person name="Skinner M.E."/>
            <person name="Lombard D.B."/>
            <person name="Zhao Y."/>
        </authorList>
    </citation>
    <scope>ACETYLATION [LARGE SCALE ANALYSIS] AT LYS-235</scope>
    <scope>IDENTIFICATION BY MASS SPECTROMETRY [LARGE SCALE ANALYSIS]</scope>
    <source>
        <tissue>Embryonic fibroblast</tissue>
    </source>
</reference>
<proteinExistence type="evidence at protein level"/>
<dbReference type="EC" id="2.3.1.256" evidence="1"/>
<dbReference type="EMBL" id="AK015640">
    <property type="protein sequence ID" value="BAC25468.1"/>
    <property type="status" value="ALT_FRAME"/>
    <property type="molecule type" value="mRNA"/>
</dbReference>
<dbReference type="EMBL" id="BC054060">
    <property type="protein sequence ID" value="AAH54060.1"/>
    <property type="molecule type" value="mRNA"/>
</dbReference>
<dbReference type="EMBL" id="BC158065">
    <property type="protein sequence ID" value="AAI58066.1"/>
    <property type="molecule type" value="mRNA"/>
</dbReference>
<dbReference type="CCDS" id="CCDS84137.1">
    <molecule id="Q8CES0-1"/>
</dbReference>
<dbReference type="RefSeq" id="NP_081768.2">
    <molecule id="Q8CES0-1"/>
    <property type="nucleotide sequence ID" value="NM_027492.2"/>
</dbReference>
<dbReference type="SMR" id="Q8CES0"/>
<dbReference type="BioGRID" id="214186">
    <property type="interactions" value="2"/>
</dbReference>
<dbReference type="FunCoup" id="Q8CES0">
    <property type="interactions" value="2915"/>
</dbReference>
<dbReference type="STRING" id="10090.ENSMUSP00000121679"/>
<dbReference type="GlyGen" id="Q8CES0">
    <property type="glycosylation" value="1 site, 1 O-linked glycan (1 site)"/>
</dbReference>
<dbReference type="iPTMnet" id="Q8CES0"/>
<dbReference type="PhosphoSitePlus" id="Q8CES0"/>
<dbReference type="jPOST" id="Q8CES0"/>
<dbReference type="PaxDb" id="10090-ENSMUSP00000041450"/>
<dbReference type="PeptideAtlas" id="Q8CES0"/>
<dbReference type="ProteomicsDB" id="293610">
    <molecule id="Q8CES0-1"/>
</dbReference>
<dbReference type="ProteomicsDB" id="293611">
    <molecule id="Q8CES0-2"/>
</dbReference>
<dbReference type="Pumba" id="Q8CES0"/>
<dbReference type="Antibodypedia" id="24132">
    <property type="antibodies" value="64 antibodies from 16 providers"/>
</dbReference>
<dbReference type="Ensembl" id="ENSMUST00000153488.9">
    <molecule id="Q8CES0-1"/>
    <property type="protein sequence ID" value="ENSMUSP00000121679.2"/>
    <property type="gene ID" value="ENSMUSG00000036282.16"/>
</dbReference>
<dbReference type="GeneID" id="70646"/>
<dbReference type="KEGG" id="mmu:70646"/>
<dbReference type="UCSC" id="uc007tkc.1">
    <molecule id="Q8CES0-1"/>
    <property type="organism name" value="mouse"/>
</dbReference>
<dbReference type="UCSC" id="uc007tkd.1">
    <molecule id="Q8CES0-2"/>
    <property type="organism name" value="mouse"/>
</dbReference>
<dbReference type="AGR" id="MGI:1922259"/>
<dbReference type="CTD" id="122830"/>
<dbReference type="MGI" id="MGI:1922259">
    <property type="gene designation" value="Naa30"/>
</dbReference>
<dbReference type="VEuPathDB" id="HostDB:ENSMUSG00000036282"/>
<dbReference type="eggNOG" id="KOG3139">
    <property type="taxonomic scope" value="Eukaryota"/>
</dbReference>
<dbReference type="GeneTree" id="ENSGT00390000005665"/>
<dbReference type="HOGENOM" id="CLU_013985_0_0_1"/>
<dbReference type="InParanoid" id="Q8CES0"/>
<dbReference type="PhylomeDB" id="Q8CES0"/>
<dbReference type="BioGRID-ORCS" id="70646">
    <property type="hits" value="26 hits in 80 CRISPR screens"/>
</dbReference>
<dbReference type="ChiTaRS" id="Naa30">
    <property type="organism name" value="mouse"/>
</dbReference>
<dbReference type="PRO" id="PR:Q8CES0"/>
<dbReference type="Proteomes" id="UP000000589">
    <property type="component" value="Chromosome 14"/>
</dbReference>
<dbReference type="RNAct" id="Q8CES0">
    <property type="molecule type" value="protein"/>
</dbReference>
<dbReference type="Bgee" id="ENSMUSG00000036282">
    <property type="expression patterns" value="Expressed in secondary oocyte and 260 other cell types or tissues"/>
</dbReference>
<dbReference type="ExpressionAtlas" id="Q8CES0">
    <property type="expression patterns" value="baseline and differential"/>
</dbReference>
<dbReference type="GO" id="GO:0005737">
    <property type="term" value="C:cytoplasm"/>
    <property type="evidence" value="ECO:0000250"/>
    <property type="project" value="UniProtKB"/>
</dbReference>
<dbReference type="GO" id="GO:0031417">
    <property type="term" value="C:NatC complex"/>
    <property type="evidence" value="ECO:0000250"/>
    <property type="project" value="UniProtKB"/>
</dbReference>
<dbReference type="GO" id="GO:0005634">
    <property type="term" value="C:nucleus"/>
    <property type="evidence" value="ECO:0000250"/>
    <property type="project" value="UniProtKB"/>
</dbReference>
<dbReference type="GO" id="GO:0120518">
    <property type="term" value="F:protein N-terminal-methionine acetyltransferase activity"/>
    <property type="evidence" value="ECO:0007669"/>
    <property type="project" value="UniProtKB-EC"/>
</dbReference>
<dbReference type="GO" id="GO:0004596">
    <property type="term" value="F:protein-N-terminal amino-acid acetyltransferase activity"/>
    <property type="evidence" value="ECO:0000250"/>
    <property type="project" value="UniProtKB"/>
</dbReference>
<dbReference type="GO" id="GO:0050821">
    <property type="term" value="P:protein stabilization"/>
    <property type="evidence" value="ECO:0000250"/>
    <property type="project" value="UniProtKB"/>
</dbReference>
<dbReference type="CDD" id="cd04301">
    <property type="entry name" value="NAT_SF"/>
    <property type="match status" value="1"/>
</dbReference>
<dbReference type="FunFam" id="3.40.630.30:FF:000010">
    <property type="entry name" value="Putative N-alpha-acetyltransferase 30"/>
    <property type="match status" value="1"/>
</dbReference>
<dbReference type="Gene3D" id="3.40.630.30">
    <property type="match status" value="1"/>
</dbReference>
<dbReference type="InterPro" id="IPR016181">
    <property type="entry name" value="Acyl_CoA_acyltransferase"/>
</dbReference>
<dbReference type="InterPro" id="IPR000182">
    <property type="entry name" value="GNAT_dom"/>
</dbReference>
<dbReference type="InterPro" id="IPR044542">
    <property type="entry name" value="NAA30-like"/>
</dbReference>
<dbReference type="PANTHER" id="PTHR45896">
    <property type="entry name" value="N-ALPHA-ACETYLTRANSFERASE 30"/>
    <property type="match status" value="1"/>
</dbReference>
<dbReference type="PANTHER" id="PTHR45896:SF1">
    <property type="entry name" value="N-ALPHA-ACETYLTRANSFERASE 30"/>
    <property type="match status" value="1"/>
</dbReference>
<dbReference type="Pfam" id="PF00583">
    <property type="entry name" value="Acetyltransf_1"/>
    <property type="match status" value="1"/>
</dbReference>
<dbReference type="SUPFAM" id="SSF55729">
    <property type="entry name" value="Acyl-CoA N-acyltransferases (Nat)"/>
    <property type="match status" value="1"/>
</dbReference>
<dbReference type="PROSITE" id="PS51186">
    <property type="entry name" value="GNAT"/>
    <property type="match status" value="1"/>
</dbReference>
<comment type="function">
    <text evidence="1">Catalytic subunit of the N-terminal acetyltransferase C (NatC) complex. Catalyzes acetylation of the N-terminal methionine residues of peptides beginning with Met-Leu-Ala and Met-Leu-Gly. N-terminal acetylation protects proteins from ubiquitination and degradation by the N-end rule pathway. Necessary for the lysosomal localization and function of ARL8B sugeesting that ARL8B is a NatC substrate.</text>
</comment>
<comment type="catalytic activity">
    <reaction evidence="1">
        <text>N-terminal L-methionyl-L-leucyl-[protein] + acetyl-CoA = N-terminal N(alpha)-acetyl-L-methionyl-L-leucyl-[protein] + CoA + H(+)</text>
        <dbReference type="Rhea" id="RHEA:50520"/>
        <dbReference type="Rhea" id="RHEA-COMP:12711"/>
        <dbReference type="Rhea" id="RHEA-COMP:12712"/>
        <dbReference type="ChEBI" id="CHEBI:15378"/>
        <dbReference type="ChEBI" id="CHEBI:57287"/>
        <dbReference type="ChEBI" id="CHEBI:57288"/>
        <dbReference type="ChEBI" id="CHEBI:133377"/>
        <dbReference type="ChEBI" id="CHEBI:133378"/>
        <dbReference type="EC" id="2.3.1.256"/>
    </reaction>
</comment>
<comment type="catalytic activity">
    <reaction evidence="1">
        <text>N-terminal L-methionyl-L-isoleucyl-[protein] + acetyl-CoA = N-terminal N(alpha)-acetyl-L-methionyl-L-isoleucyl-[protein] + CoA + H(+)</text>
        <dbReference type="Rhea" id="RHEA:50524"/>
        <dbReference type="Rhea" id="RHEA-COMP:12713"/>
        <dbReference type="Rhea" id="RHEA-COMP:12714"/>
        <dbReference type="ChEBI" id="CHEBI:15378"/>
        <dbReference type="ChEBI" id="CHEBI:57287"/>
        <dbReference type="ChEBI" id="CHEBI:57288"/>
        <dbReference type="ChEBI" id="CHEBI:133379"/>
        <dbReference type="ChEBI" id="CHEBI:133380"/>
        <dbReference type="EC" id="2.3.1.256"/>
    </reaction>
</comment>
<comment type="catalytic activity">
    <reaction evidence="1">
        <text>N-terminal L-methionyl-L-phenylalanyl-[protein] + acetyl-CoA = N-terminal N(alpha)-acetyl-L-methionyl-L-phenylalanyl-[protein] + CoA + H(+)</text>
        <dbReference type="Rhea" id="RHEA:50528"/>
        <dbReference type="Rhea" id="RHEA-COMP:12715"/>
        <dbReference type="Rhea" id="RHEA-COMP:12716"/>
        <dbReference type="ChEBI" id="CHEBI:15378"/>
        <dbReference type="ChEBI" id="CHEBI:57287"/>
        <dbReference type="ChEBI" id="CHEBI:57288"/>
        <dbReference type="ChEBI" id="CHEBI:133382"/>
        <dbReference type="ChEBI" id="CHEBI:133383"/>
        <dbReference type="EC" id="2.3.1.256"/>
    </reaction>
</comment>
<comment type="catalytic activity">
    <reaction evidence="1">
        <text>N-terminal L-methionyl-L-tryptophyl-[protein] + acetyl-CoA = N-terminal N(alpha)-acetyl-L-methionyl-L-tryptophyl-[protein] + CoA + H(+)</text>
        <dbReference type="Rhea" id="RHEA:50560"/>
        <dbReference type="Rhea" id="RHEA-COMP:12724"/>
        <dbReference type="Rhea" id="RHEA-COMP:12725"/>
        <dbReference type="ChEBI" id="CHEBI:15378"/>
        <dbReference type="ChEBI" id="CHEBI:57287"/>
        <dbReference type="ChEBI" id="CHEBI:57288"/>
        <dbReference type="ChEBI" id="CHEBI:133386"/>
        <dbReference type="ChEBI" id="CHEBI:133387"/>
        <dbReference type="EC" id="2.3.1.256"/>
    </reaction>
</comment>
<comment type="catalytic activity">
    <reaction evidence="1">
        <text>N-terminal L-methionyl-L-tyrosyl-[protein] + acetyl-CoA = N-terminal N(alpha)-acetyl-L-methionyl-L-tyrosyl-[protein] + CoA + H(+)</text>
        <dbReference type="Rhea" id="RHEA:50532"/>
        <dbReference type="Rhea" id="RHEA-COMP:12717"/>
        <dbReference type="Rhea" id="RHEA-COMP:12718"/>
        <dbReference type="ChEBI" id="CHEBI:15378"/>
        <dbReference type="ChEBI" id="CHEBI:57287"/>
        <dbReference type="ChEBI" id="CHEBI:57288"/>
        <dbReference type="ChEBI" id="CHEBI:133384"/>
        <dbReference type="ChEBI" id="CHEBI:133385"/>
        <dbReference type="EC" id="2.3.1.256"/>
    </reaction>
</comment>
<comment type="subunit">
    <text evidence="1">Component of the N-terminal acetyltransferase C (NatC) complex, which is composed of NAA35, NAA38 and NAA30.</text>
</comment>
<comment type="subcellular location">
    <subcellularLocation>
        <location evidence="1">Cytoplasm</location>
    </subcellularLocation>
    <subcellularLocation>
        <location evidence="1">Nucleus</location>
    </subcellularLocation>
</comment>
<comment type="alternative products">
    <event type="alternative splicing"/>
    <isoform>
        <id>Q8CES0-1</id>
        <name>1</name>
        <sequence type="displayed"/>
    </isoform>
    <isoform>
        <id>Q8CES0-2</id>
        <name>2</name>
        <sequence type="described" ref="VSP_031582 VSP_031583"/>
    </isoform>
</comment>
<comment type="similarity">
    <text evidence="5">Belongs to the acetyltransferase family. MAK3 subfamily.</text>
</comment>
<comment type="sequence caution" evidence="5">
    <conflict type="frameshift">
        <sequence resource="EMBL-CDS" id="BAC25468"/>
    </conflict>
</comment>
<keyword id="KW-0007">Acetylation</keyword>
<keyword id="KW-0012">Acyltransferase</keyword>
<keyword id="KW-0025">Alternative splicing</keyword>
<keyword id="KW-0963">Cytoplasm</keyword>
<keyword id="KW-0539">Nucleus</keyword>
<keyword id="KW-0597">Phosphoprotein</keyword>
<keyword id="KW-1185">Reference proteome</keyword>
<keyword id="KW-0808">Transferase</keyword>
<protein>
    <recommendedName>
        <fullName>N-alpha-acetyltransferase 30</fullName>
        <ecNumber evidence="1">2.3.1.256</ecNumber>
    </recommendedName>
    <alternativeName>
        <fullName>N-acetyltransferase 12</fullName>
    </alternativeName>
    <alternativeName>
        <fullName>N-acetyltransferase MAK3 homolog</fullName>
    </alternativeName>
    <alternativeName>
        <fullName>NatC catalytic subunit</fullName>
    </alternativeName>
</protein>
<name>NAA30_MOUSE</name>